<comment type="function">
    <text evidence="1">Major role in the synthesis of nucleoside triphosphates other than ATP. The ATP gamma phosphate is transferred to the NDP beta phosphate via a ping-pong mechanism, using a phosphorylated active-site intermediate.</text>
</comment>
<comment type="catalytic activity">
    <reaction evidence="1">
        <text>a 2'-deoxyribonucleoside 5'-diphosphate + ATP = a 2'-deoxyribonucleoside 5'-triphosphate + ADP</text>
        <dbReference type="Rhea" id="RHEA:44640"/>
        <dbReference type="ChEBI" id="CHEBI:30616"/>
        <dbReference type="ChEBI" id="CHEBI:61560"/>
        <dbReference type="ChEBI" id="CHEBI:73316"/>
        <dbReference type="ChEBI" id="CHEBI:456216"/>
        <dbReference type="EC" id="2.7.4.6"/>
    </reaction>
</comment>
<comment type="catalytic activity">
    <reaction evidence="1">
        <text>a ribonucleoside 5'-diphosphate + ATP = a ribonucleoside 5'-triphosphate + ADP</text>
        <dbReference type="Rhea" id="RHEA:18113"/>
        <dbReference type="ChEBI" id="CHEBI:30616"/>
        <dbReference type="ChEBI" id="CHEBI:57930"/>
        <dbReference type="ChEBI" id="CHEBI:61557"/>
        <dbReference type="ChEBI" id="CHEBI:456216"/>
        <dbReference type="EC" id="2.7.4.6"/>
    </reaction>
</comment>
<comment type="cofactor">
    <cofactor evidence="1">
        <name>Mg(2+)</name>
        <dbReference type="ChEBI" id="CHEBI:18420"/>
    </cofactor>
</comment>
<comment type="subunit">
    <text evidence="1">Homotetramer.</text>
</comment>
<comment type="subcellular location">
    <subcellularLocation>
        <location evidence="1">Cytoplasm</location>
    </subcellularLocation>
</comment>
<comment type="similarity">
    <text evidence="1">Belongs to the NDK family.</text>
</comment>
<protein>
    <recommendedName>
        <fullName evidence="1">Nucleoside diphosphate kinase</fullName>
        <shortName evidence="1">NDK</shortName>
        <shortName evidence="1">NDP kinase</shortName>
        <ecNumber evidence="1">2.7.4.6</ecNumber>
    </recommendedName>
    <alternativeName>
        <fullName evidence="1">Nucleoside-2-P kinase</fullName>
    </alternativeName>
</protein>
<evidence type="ECO:0000255" key="1">
    <source>
        <dbReference type="HAMAP-Rule" id="MF_00451"/>
    </source>
</evidence>
<name>NDK_IDILO</name>
<gene>
    <name evidence="1" type="primary">ndk</name>
    <name type="ordered locus">IL2038</name>
</gene>
<sequence>MALERTLSIIKPDAVAKNLIGAIYNRFESAGLRIVGAKMMHLSKEQAEGFYAEHKERPFFGALVEFMTSGPIVVQVLEGEDAVRKNRDIMGATNPAEALAGTIRADYAETIDENAVHGSDATESAAREISYFFSDEEVCQRTR</sequence>
<organism>
    <name type="scientific">Idiomarina loihiensis (strain ATCC BAA-735 / DSM 15497 / L2-TR)</name>
    <dbReference type="NCBI Taxonomy" id="283942"/>
    <lineage>
        <taxon>Bacteria</taxon>
        <taxon>Pseudomonadati</taxon>
        <taxon>Pseudomonadota</taxon>
        <taxon>Gammaproteobacteria</taxon>
        <taxon>Alteromonadales</taxon>
        <taxon>Idiomarinaceae</taxon>
        <taxon>Idiomarina</taxon>
    </lineage>
</organism>
<keyword id="KW-0067">ATP-binding</keyword>
<keyword id="KW-0963">Cytoplasm</keyword>
<keyword id="KW-0418">Kinase</keyword>
<keyword id="KW-0460">Magnesium</keyword>
<keyword id="KW-0479">Metal-binding</keyword>
<keyword id="KW-0546">Nucleotide metabolism</keyword>
<keyword id="KW-0547">Nucleotide-binding</keyword>
<keyword id="KW-0597">Phosphoprotein</keyword>
<keyword id="KW-1185">Reference proteome</keyword>
<keyword id="KW-0808">Transferase</keyword>
<feature type="chain" id="PRO_0000136994" description="Nucleoside diphosphate kinase">
    <location>
        <begin position="1"/>
        <end position="143"/>
    </location>
</feature>
<feature type="active site" description="Pros-phosphohistidine intermediate" evidence="1">
    <location>
        <position position="117"/>
    </location>
</feature>
<feature type="binding site" evidence="1">
    <location>
        <position position="11"/>
    </location>
    <ligand>
        <name>ATP</name>
        <dbReference type="ChEBI" id="CHEBI:30616"/>
    </ligand>
</feature>
<feature type="binding site" evidence="1">
    <location>
        <position position="59"/>
    </location>
    <ligand>
        <name>ATP</name>
        <dbReference type="ChEBI" id="CHEBI:30616"/>
    </ligand>
</feature>
<feature type="binding site" evidence="1">
    <location>
        <position position="87"/>
    </location>
    <ligand>
        <name>ATP</name>
        <dbReference type="ChEBI" id="CHEBI:30616"/>
    </ligand>
</feature>
<feature type="binding site" evidence="1">
    <location>
        <position position="93"/>
    </location>
    <ligand>
        <name>ATP</name>
        <dbReference type="ChEBI" id="CHEBI:30616"/>
    </ligand>
</feature>
<feature type="binding site" evidence="1">
    <location>
        <position position="104"/>
    </location>
    <ligand>
        <name>ATP</name>
        <dbReference type="ChEBI" id="CHEBI:30616"/>
    </ligand>
</feature>
<feature type="binding site" evidence="1">
    <location>
        <position position="114"/>
    </location>
    <ligand>
        <name>ATP</name>
        <dbReference type="ChEBI" id="CHEBI:30616"/>
    </ligand>
</feature>
<accession>Q5QYB9</accession>
<proteinExistence type="inferred from homology"/>
<dbReference type="EC" id="2.7.4.6" evidence="1"/>
<dbReference type="EMBL" id="AE017340">
    <property type="protein sequence ID" value="AAV82870.1"/>
    <property type="molecule type" value="Genomic_DNA"/>
</dbReference>
<dbReference type="RefSeq" id="WP_011235266.1">
    <property type="nucleotide sequence ID" value="NC_006512.1"/>
</dbReference>
<dbReference type="SMR" id="Q5QYB9"/>
<dbReference type="STRING" id="283942.IL2038"/>
<dbReference type="GeneID" id="78252758"/>
<dbReference type="KEGG" id="ilo:IL2038"/>
<dbReference type="eggNOG" id="COG0105">
    <property type="taxonomic scope" value="Bacteria"/>
</dbReference>
<dbReference type="HOGENOM" id="CLU_060216_8_1_6"/>
<dbReference type="OrthoDB" id="9801161at2"/>
<dbReference type="Proteomes" id="UP000001171">
    <property type="component" value="Chromosome"/>
</dbReference>
<dbReference type="GO" id="GO:0005737">
    <property type="term" value="C:cytoplasm"/>
    <property type="evidence" value="ECO:0007669"/>
    <property type="project" value="UniProtKB-SubCell"/>
</dbReference>
<dbReference type="GO" id="GO:0005524">
    <property type="term" value="F:ATP binding"/>
    <property type="evidence" value="ECO:0007669"/>
    <property type="project" value="UniProtKB-UniRule"/>
</dbReference>
<dbReference type="GO" id="GO:0046872">
    <property type="term" value="F:metal ion binding"/>
    <property type="evidence" value="ECO:0007669"/>
    <property type="project" value="UniProtKB-KW"/>
</dbReference>
<dbReference type="GO" id="GO:0004550">
    <property type="term" value="F:nucleoside diphosphate kinase activity"/>
    <property type="evidence" value="ECO:0007669"/>
    <property type="project" value="UniProtKB-UniRule"/>
</dbReference>
<dbReference type="GO" id="GO:0006241">
    <property type="term" value="P:CTP biosynthetic process"/>
    <property type="evidence" value="ECO:0007669"/>
    <property type="project" value="UniProtKB-UniRule"/>
</dbReference>
<dbReference type="GO" id="GO:0006183">
    <property type="term" value="P:GTP biosynthetic process"/>
    <property type="evidence" value="ECO:0007669"/>
    <property type="project" value="UniProtKB-UniRule"/>
</dbReference>
<dbReference type="GO" id="GO:0006228">
    <property type="term" value="P:UTP biosynthetic process"/>
    <property type="evidence" value="ECO:0007669"/>
    <property type="project" value="UniProtKB-UniRule"/>
</dbReference>
<dbReference type="CDD" id="cd04413">
    <property type="entry name" value="NDPk_I"/>
    <property type="match status" value="1"/>
</dbReference>
<dbReference type="FunFam" id="3.30.70.141:FF:000001">
    <property type="entry name" value="Nucleoside diphosphate kinase"/>
    <property type="match status" value="1"/>
</dbReference>
<dbReference type="Gene3D" id="3.30.70.141">
    <property type="entry name" value="Nucleoside diphosphate kinase-like domain"/>
    <property type="match status" value="1"/>
</dbReference>
<dbReference type="HAMAP" id="MF_00451">
    <property type="entry name" value="NDP_kinase"/>
    <property type="match status" value="1"/>
</dbReference>
<dbReference type="InterPro" id="IPR034907">
    <property type="entry name" value="NDK-like_dom"/>
</dbReference>
<dbReference type="InterPro" id="IPR036850">
    <property type="entry name" value="NDK-like_dom_sf"/>
</dbReference>
<dbReference type="InterPro" id="IPR001564">
    <property type="entry name" value="Nucleoside_diP_kinase"/>
</dbReference>
<dbReference type="NCBIfam" id="NF001908">
    <property type="entry name" value="PRK00668.1"/>
    <property type="match status" value="1"/>
</dbReference>
<dbReference type="PANTHER" id="PTHR11349">
    <property type="entry name" value="NUCLEOSIDE DIPHOSPHATE KINASE"/>
    <property type="match status" value="1"/>
</dbReference>
<dbReference type="Pfam" id="PF00334">
    <property type="entry name" value="NDK"/>
    <property type="match status" value="1"/>
</dbReference>
<dbReference type="PRINTS" id="PR01243">
    <property type="entry name" value="NUCDPKINASE"/>
</dbReference>
<dbReference type="SMART" id="SM00562">
    <property type="entry name" value="NDK"/>
    <property type="match status" value="1"/>
</dbReference>
<dbReference type="SUPFAM" id="SSF54919">
    <property type="entry name" value="Nucleoside diphosphate kinase, NDK"/>
    <property type="match status" value="1"/>
</dbReference>
<dbReference type="PROSITE" id="PS51374">
    <property type="entry name" value="NDPK_LIKE"/>
    <property type="match status" value="1"/>
</dbReference>
<reference key="1">
    <citation type="journal article" date="2004" name="Proc. Natl. Acad. Sci. U.S.A.">
        <title>Genome sequence of the deep-sea gamma-proteobacterium Idiomarina loihiensis reveals amino acid fermentation as a source of carbon and energy.</title>
        <authorList>
            <person name="Hou S."/>
            <person name="Saw J.H."/>
            <person name="Lee K.S."/>
            <person name="Freitas T.A."/>
            <person name="Belisle C."/>
            <person name="Kawarabayasi Y."/>
            <person name="Donachie S.P."/>
            <person name="Pikina A."/>
            <person name="Galperin M.Y."/>
            <person name="Koonin E.V."/>
            <person name="Makarova K.S."/>
            <person name="Omelchenko M.V."/>
            <person name="Sorokin A."/>
            <person name="Wolf Y.I."/>
            <person name="Li Q.X."/>
            <person name="Keum Y.S."/>
            <person name="Campbell S."/>
            <person name="Denery J."/>
            <person name="Aizawa S."/>
            <person name="Shibata S."/>
            <person name="Malahoff A."/>
            <person name="Alam M."/>
        </authorList>
    </citation>
    <scope>NUCLEOTIDE SEQUENCE [LARGE SCALE GENOMIC DNA]</scope>
    <source>
        <strain>ATCC BAA-735 / DSM 15497 / L2-TR</strain>
    </source>
</reference>